<protein>
    <recommendedName>
        <fullName evidence="2">tRNA (guanine-N(7)-)-methyltransferase</fullName>
        <ecNumber evidence="2">2.1.1.33</ecNumber>
    </recommendedName>
    <alternativeName>
        <fullName evidence="2">tRNA (guanine(46)-N(7))-methyltransferase</fullName>
    </alternativeName>
    <alternativeName>
        <fullName evidence="2">tRNA(m7G46)-methyltransferase</fullName>
    </alternativeName>
</protein>
<comment type="function">
    <text evidence="2">Catalyzes the formation of N(7)-methylguanine at position 46 (m7G46) in tRNA.</text>
</comment>
<comment type="catalytic activity">
    <reaction evidence="2">
        <text>guanosine(46) in tRNA + S-adenosyl-L-methionine = N(7)-methylguanosine(46) in tRNA + S-adenosyl-L-homocysteine</text>
        <dbReference type="Rhea" id="RHEA:42708"/>
        <dbReference type="Rhea" id="RHEA-COMP:10188"/>
        <dbReference type="Rhea" id="RHEA-COMP:10189"/>
        <dbReference type="ChEBI" id="CHEBI:57856"/>
        <dbReference type="ChEBI" id="CHEBI:59789"/>
        <dbReference type="ChEBI" id="CHEBI:74269"/>
        <dbReference type="ChEBI" id="CHEBI:74480"/>
        <dbReference type="EC" id="2.1.1.33"/>
    </reaction>
</comment>
<comment type="pathway">
    <text evidence="2">tRNA modification; N(7)-methylguanine-tRNA biosynthesis.</text>
</comment>
<comment type="similarity">
    <text evidence="2">Belongs to the class I-like SAM-binding methyltransferase superfamily. TrmB family.</text>
</comment>
<comment type="sequence caution" evidence="4">
    <conflict type="erroneous initiation">
        <sequence resource="EMBL-CDS" id="AAT83534"/>
    </conflict>
</comment>
<feature type="chain" id="PRO_0000171372" description="tRNA (guanine-N(7)-)-methyltransferase">
    <location>
        <begin position="1"/>
        <end position="276"/>
    </location>
</feature>
<feature type="region of interest" description="Disordered" evidence="3">
    <location>
        <begin position="1"/>
        <end position="23"/>
    </location>
</feature>
<feature type="active site" evidence="1">
    <location>
        <position position="178"/>
    </location>
</feature>
<feature type="binding site" evidence="2">
    <location>
        <position position="103"/>
    </location>
    <ligand>
        <name>S-adenosyl-L-methionine</name>
        <dbReference type="ChEBI" id="CHEBI:59789"/>
    </ligand>
</feature>
<feature type="binding site" evidence="2">
    <location>
        <position position="128"/>
    </location>
    <ligand>
        <name>S-adenosyl-L-methionine</name>
        <dbReference type="ChEBI" id="CHEBI:59789"/>
    </ligand>
</feature>
<feature type="binding site" evidence="2">
    <location>
        <position position="155"/>
    </location>
    <ligand>
        <name>S-adenosyl-L-methionine</name>
        <dbReference type="ChEBI" id="CHEBI:59789"/>
    </ligand>
</feature>
<feature type="binding site" evidence="2">
    <location>
        <position position="178"/>
    </location>
    <ligand>
        <name>S-adenosyl-L-methionine</name>
        <dbReference type="ChEBI" id="CHEBI:59789"/>
    </ligand>
</feature>
<feature type="binding site" evidence="2">
    <location>
        <position position="182"/>
    </location>
    <ligand>
        <name>substrate</name>
    </ligand>
</feature>
<feature type="binding site" evidence="2">
    <location>
        <position position="214"/>
    </location>
    <ligand>
        <name>substrate</name>
    </ligand>
</feature>
<feature type="binding site" evidence="2">
    <location>
        <begin position="252"/>
        <end position="255"/>
    </location>
    <ligand>
        <name>substrate</name>
    </ligand>
</feature>
<accession>Q6A6S9</accession>
<gene>
    <name evidence="2" type="primary">trmB</name>
    <name type="ordered locus">PPA1808</name>
</gene>
<reference key="1">
    <citation type="journal article" date="2004" name="Science">
        <title>The complete genome sequence of Propionibacterium acnes, a commensal of human skin.</title>
        <authorList>
            <person name="Brueggemann H."/>
            <person name="Henne A."/>
            <person name="Hoster F."/>
            <person name="Liesegang H."/>
            <person name="Wiezer A."/>
            <person name="Strittmatter A."/>
            <person name="Hujer S."/>
            <person name="Duerre P."/>
            <person name="Gottschalk G."/>
        </authorList>
    </citation>
    <scope>NUCLEOTIDE SEQUENCE [LARGE SCALE GENOMIC DNA]</scope>
    <source>
        <strain>DSM 16379 / KPA171202</strain>
    </source>
</reference>
<proteinExistence type="inferred from homology"/>
<dbReference type="EC" id="2.1.1.33" evidence="2"/>
<dbReference type="EMBL" id="AE017283">
    <property type="protein sequence ID" value="AAT83534.1"/>
    <property type="status" value="ALT_INIT"/>
    <property type="molecule type" value="Genomic_DNA"/>
</dbReference>
<dbReference type="SMR" id="Q6A6S9"/>
<dbReference type="EnsemblBacteria" id="AAT83534">
    <property type="protein sequence ID" value="AAT83534"/>
    <property type="gene ID" value="PPA1808"/>
</dbReference>
<dbReference type="KEGG" id="pac:PPA1808"/>
<dbReference type="eggNOG" id="COG0220">
    <property type="taxonomic scope" value="Bacteria"/>
</dbReference>
<dbReference type="HOGENOM" id="CLU_050910_0_0_11"/>
<dbReference type="UniPathway" id="UPA00989"/>
<dbReference type="Proteomes" id="UP000000603">
    <property type="component" value="Chromosome"/>
</dbReference>
<dbReference type="GO" id="GO:0043527">
    <property type="term" value="C:tRNA methyltransferase complex"/>
    <property type="evidence" value="ECO:0007669"/>
    <property type="project" value="TreeGrafter"/>
</dbReference>
<dbReference type="GO" id="GO:0008176">
    <property type="term" value="F:tRNA (guanine(46)-N7)-methyltransferase activity"/>
    <property type="evidence" value="ECO:0007669"/>
    <property type="project" value="UniProtKB-UniRule"/>
</dbReference>
<dbReference type="CDD" id="cd02440">
    <property type="entry name" value="AdoMet_MTases"/>
    <property type="match status" value="1"/>
</dbReference>
<dbReference type="Gene3D" id="3.40.50.150">
    <property type="entry name" value="Vaccinia Virus protein VP39"/>
    <property type="match status" value="1"/>
</dbReference>
<dbReference type="HAMAP" id="MF_01057">
    <property type="entry name" value="tRNA_methyltr_TrmB"/>
    <property type="match status" value="1"/>
</dbReference>
<dbReference type="InterPro" id="IPR029063">
    <property type="entry name" value="SAM-dependent_MTases_sf"/>
</dbReference>
<dbReference type="InterPro" id="IPR003358">
    <property type="entry name" value="tRNA_(Gua-N-7)_MeTrfase_Trmb"/>
</dbReference>
<dbReference type="InterPro" id="IPR055361">
    <property type="entry name" value="tRNA_methyltr_TrmB_bact"/>
</dbReference>
<dbReference type="NCBIfam" id="TIGR00091">
    <property type="entry name" value="tRNA (guanosine(46)-N7)-methyltransferase TrmB"/>
    <property type="match status" value="1"/>
</dbReference>
<dbReference type="PANTHER" id="PTHR23417">
    <property type="entry name" value="3-DEOXY-D-MANNO-OCTULOSONIC-ACID TRANSFERASE/TRNA GUANINE-N 7 - -METHYLTRANSFERASE"/>
    <property type="match status" value="1"/>
</dbReference>
<dbReference type="PANTHER" id="PTHR23417:SF14">
    <property type="entry name" value="PENTACOTRIPEPTIDE-REPEAT REGION OF PRORP DOMAIN-CONTAINING PROTEIN"/>
    <property type="match status" value="1"/>
</dbReference>
<dbReference type="Pfam" id="PF02390">
    <property type="entry name" value="Methyltransf_4"/>
    <property type="match status" value="1"/>
</dbReference>
<dbReference type="SUPFAM" id="SSF53335">
    <property type="entry name" value="S-adenosyl-L-methionine-dependent methyltransferases"/>
    <property type="match status" value="1"/>
</dbReference>
<dbReference type="PROSITE" id="PS51625">
    <property type="entry name" value="SAM_MT_TRMB"/>
    <property type="match status" value="1"/>
</dbReference>
<organism>
    <name type="scientific">Cutibacterium acnes (strain DSM 16379 / KPA171202)</name>
    <name type="common">Propionibacterium acnes</name>
    <dbReference type="NCBI Taxonomy" id="267747"/>
    <lineage>
        <taxon>Bacteria</taxon>
        <taxon>Bacillati</taxon>
        <taxon>Actinomycetota</taxon>
        <taxon>Actinomycetes</taxon>
        <taxon>Propionibacteriales</taxon>
        <taxon>Propionibacteriaceae</taxon>
        <taxon>Cutibacterium</taxon>
    </lineage>
</organism>
<sequence length="276" mass="30383">MRPDPAPLDPTDASPAQARRHQPGLGVEVSAGAHRSGDRVRRGVVSFVRRSPRMNVSQQRAMNTLASTYLIDVPRDATSTSVAPGSRLDLPAIFGRTAPLTVEIGVGSGDVLAALAAAHPERDFIGFEVYLPSIATTLNKLENAGASNARVIMADATAGLDHLFGPADLDELWTFFADPWHKKRHHKRRIVNPDTARLVTSRLRPGGLWRLATDWDDYAHWMLEVLSAEPLLKPVDAGPDGFSPRWPERPVTRYENKGLTAGRTIHDLTWRRVDES</sequence>
<evidence type="ECO:0000250" key="1"/>
<evidence type="ECO:0000255" key="2">
    <source>
        <dbReference type="HAMAP-Rule" id="MF_01057"/>
    </source>
</evidence>
<evidence type="ECO:0000256" key="3">
    <source>
        <dbReference type="SAM" id="MobiDB-lite"/>
    </source>
</evidence>
<evidence type="ECO:0000305" key="4"/>
<name>TRMB_CUTAK</name>
<keyword id="KW-0489">Methyltransferase</keyword>
<keyword id="KW-0949">S-adenosyl-L-methionine</keyword>
<keyword id="KW-0808">Transferase</keyword>
<keyword id="KW-0819">tRNA processing</keyword>